<sequence length="204" mass="23371">MRGTLYIVSAASGTGKSSIVNATLERDQQIALSISFTSRQPRPNERHAQHYYFVSADEFQRMIEAGDFFEYALVHDDWKGTAHQSVEPQLAAGHDVLLEIDWQGARQVRNKIPDAISIFILPPSRAALEERLRKRGQDSEEVIHRRLAAVHEEMAHYDEFDYTIINEHFETAVSEMSAIFTASRLRRQTQKVRHANLIRTLLTP</sequence>
<evidence type="ECO:0000250" key="1"/>
<evidence type="ECO:0000305" key="2"/>
<keyword id="KW-0067">ATP-binding</keyword>
<keyword id="KW-0963">Cytoplasm</keyword>
<keyword id="KW-0418">Kinase</keyword>
<keyword id="KW-0547">Nucleotide-binding</keyword>
<keyword id="KW-0808">Transferase</keyword>
<proteinExistence type="inferred from homology"/>
<comment type="function">
    <text evidence="1">Essential for recycling GMP and indirectly, cGMP.</text>
</comment>
<comment type="catalytic activity">
    <reaction>
        <text>GMP + ATP = GDP + ADP</text>
        <dbReference type="Rhea" id="RHEA:20780"/>
        <dbReference type="ChEBI" id="CHEBI:30616"/>
        <dbReference type="ChEBI" id="CHEBI:58115"/>
        <dbReference type="ChEBI" id="CHEBI:58189"/>
        <dbReference type="ChEBI" id="CHEBI:456216"/>
        <dbReference type="EC" id="2.7.4.8"/>
    </reaction>
</comment>
<comment type="subcellular location">
    <subcellularLocation>
        <location evidence="1">Cytoplasm</location>
    </subcellularLocation>
</comment>
<comment type="similarity">
    <text evidence="2">Belongs to the guanylate kinase family.</text>
</comment>
<name>KGUA_XYLFA</name>
<accession>Q9PD76</accession>
<protein>
    <recommendedName>
        <fullName>Guanylate kinase</fullName>
        <ecNumber>2.7.4.8</ecNumber>
    </recommendedName>
    <alternativeName>
        <fullName>GMP kinase</fullName>
    </alternativeName>
</protein>
<feature type="chain" id="PRO_0000170645" description="Guanylate kinase">
    <location>
        <begin position="1"/>
        <end position="204"/>
    </location>
</feature>
<feature type="domain" description="Guanylate kinase-like">
    <location>
        <begin position="3"/>
        <end position="181"/>
    </location>
</feature>
<feature type="binding site" evidence="1">
    <location>
        <begin position="10"/>
        <end position="17"/>
    </location>
    <ligand>
        <name>ATP</name>
        <dbReference type="ChEBI" id="CHEBI:30616"/>
    </ligand>
</feature>
<organism>
    <name type="scientific">Xylella fastidiosa (strain 9a5c)</name>
    <dbReference type="NCBI Taxonomy" id="160492"/>
    <lineage>
        <taxon>Bacteria</taxon>
        <taxon>Pseudomonadati</taxon>
        <taxon>Pseudomonadota</taxon>
        <taxon>Gammaproteobacteria</taxon>
        <taxon>Lysobacterales</taxon>
        <taxon>Lysobacteraceae</taxon>
        <taxon>Xylella</taxon>
    </lineage>
</organism>
<dbReference type="EC" id="2.7.4.8"/>
<dbReference type="EMBL" id="AE003849">
    <property type="protein sequence ID" value="AAF84312.1"/>
    <property type="molecule type" value="Genomic_DNA"/>
</dbReference>
<dbReference type="PIR" id="A82673">
    <property type="entry name" value="A82673"/>
</dbReference>
<dbReference type="RefSeq" id="WP_010894004.1">
    <property type="nucleotide sequence ID" value="NC_002488.3"/>
</dbReference>
<dbReference type="SMR" id="Q9PD76"/>
<dbReference type="STRING" id="160492.XF_1503"/>
<dbReference type="KEGG" id="xfa:XF_1503"/>
<dbReference type="eggNOG" id="COG0194">
    <property type="taxonomic scope" value="Bacteria"/>
</dbReference>
<dbReference type="HOGENOM" id="CLU_001715_1_0_6"/>
<dbReference type="Proteomes" id="UP000000812">
    <property type="component" value="Chromosome"/>
</dbReference>
<dbReference type="GO" id="GO:0005829">
    <property type="term" value="C:cytosol"/>
    <property type="evidence" value="ECO:0007669"/>
    <property type="project" value="TreeGrafter"/>
</dbReference>
<dbReference type="GO" id="GO:0005524">
    <property type="term" value="F:ATP binding"/>
    <property type="evidence" value="ECO:0007669"/>
    <property type="project" value="UniProtKB-UniRule"/>
</dbReference>
<dbReference type="GO" id="GO:0004385">
    <property type="term" value="F:guanylate kinase activity"/>
    <property type="evidence" value="ECO:0007669"/>
    <property type="project" value="UniProtKB-UniRule"/>
</dbReference>
<dbReference type="CDD" id="cd00071">
    <property type="entry name" value="GMPK"/>
    <property type="match status" value="1"/>
</dbReference>
<dbReference type="FunFam" id="3.30.63.10:FF:000005">
    <property type="entry name" value="Guanylate kinase"/>
    <property type="match status" value="1"/>
</dbReference>
<dbReference type="FunFam" id="3.40.50.300:FF:000084">
    <property type="entry name" value="Guanylate kinase"/>
    <property type="match status" value="1"/>
</dbReference>
<dbReference type="Gene3D" id="3.30.63.10">
    <property type="entry name" value="Guanylate Kinase phosphate binding domain"/>
    <property type="match status" value="1"/>
</dbReference>
<dbReference type="Gene3D" id="3.40.50.300">
    <property type="entry name" value="P-loop containing nucleotide triphosphate hydrolases"/>
    <property type="match status" value="1"/>
</dbReference>
<dbReference type="HAMAP" id="MF_00328">
    <property type="entry name" value="Guanylate_kinase"/>
    <property type="match status" value="1"/>
</dbReference>
<dbReference type="InterPro" id="IPR008145">
    <property type="entry name" value="GK/Ca_channel_bsu"/>
</dbReference>
<dbReference type="InterPro" id="IPR008144">
    <property type="entry name" value="Guanylate_kin-like_dom"/>
</dbReference>
<dbReference type="InterPro" id="IPR017665">
    <property type="entry name" value="Guanylate_kinase"/>
</dbReference>
<dbReference type="InterPro" id="IPR020590">
    <property type="entry name" value="Guanylate_kinase_CS"/>
</dbReference>
<dbReference type="InterPro" id="IPR027417">
    <property type="entry name" value="P-loop_NTPase"/>
</dbReference>
<dbReference type="NCBIfam" id="TIGR03263">
    <property type="entry name" value="guanyl_kin"/>
    <property type="match status" value="1"/>
</dbReference>
<dbReference type="PANTHER" id="PTHR23117:SF13">
    <property type="entry name" value="GUANYLATE KINASE"/>
    <property type="match status" value="1"/>
</dbReference>
<dbReference type="PANTHER" id="PTHR23117">
    <property type="entry name" value="GUANYLATE KINASE-RELATED"/>
    <property type="match status" value="1"/>
</dbReference>
<dbReference type="Pfam" id="PF00625">
    <property type="entry name" value="Guanylate_kin"/>
    <property type="match status" value="1"/>
</dbReference>
<dbReference type="SMART" id="SM00072">
    <property type="entry name" value="GuKc"/>
    <property type="match status" value="1"/>
</dbReference>
<dbReference type="SUPFAM" id="SSF52540">
    <property type="entry name" value="P-loop containing nucleoside triphosphate hydrolases"/>
    <property type="match status" value="1"/>
</dbReference>
<dbReference type="PROSITE" id="PS00856">
    <property type="entry name" value="GUANYLATE_KINASE_1"/>
    <property type="match status" value="1"/>
</dbReference>
<dbReference type="PROSITE" id="PS50052">
    <property type="entry name" value="GUANYLATE_KINASE_2"/>
    <property type="match status" value="1"/>
</dbReference>
<reference key="1">
    <citation type="journal article" date="2000" name="Nature">
        <title>The genome sequence of the plant pathogen Xylella fastidiosa.</title>
        <authorList>
            <person name="Simpson A.J.G."/>
            <person name="Reinach F.C."/>
            <person name="Arruda P."/>
            <person name="Abreu F.A."/>
            <person name="Acencio M."/>
            <person name="Alvarenga R."/>
            <person name="Alves L.M.C."/>
            <person name="Araya J.E."/>
            <person name="Baia G.S."/>
            <person name="Baptista C.S."/>
            <person name="Barros M.H."/>
            <person name="Bonaccorsi E.D."/>
            <person name="Bordin S."/>
            <person name="Bove J.M."/>
            <person name="Briones M.R.S."/>
            <person name="Bueno M.R.P."/>
            <person name="Camargo A.A."/>
            <person name="Camargo L.E.A."/>
            <person name="Carraro D.M."/>
            <person name="Carrer H."/>
            <person name="Colauto N.B."/>
            <person name="Colombo C."/>
            <person name="Costa F.F."/>
            <person name="Costa M.C.R."/>
            <person name="Costa-Neto C.M."/>
            <person name="Coutinho L.L."/>
            <person name="Cristofani M."/>
            <person name="Dias-Neto E."/>
            <person name="Docena C."/>
            <person name="El-Dorry H."/>
            <person name="Facincani A.P."/>
            <person name="Ferreira A.J.S."/>
            <person name="Ferreira V.C.A."/>
            <person name="Ferro J.A."/>
            <person name="Fraga J.S."/>
            <person name="Franca S.C."/>
            <person name="Franco M.C."/>
            <person name="Frohme M."/>
            <person name="Furlan L.R."/>
            <person name="Garnier M."/>
            <person name="Goldman G.H."/>
            <person name="Goldman M.H.S."/>
            <person name="Gomes S.L."/>
            <person name="Gruber A."/>
            <person name="Ho P.L."/>
            <person name="Hoheisel J.D."/>
            <person name="Junqueira M.L."/>
            <person name="Kemper E.L."/>
            <person name="Kitajima J.P."/>
            <person name="Krieger J.E."/>
            <person name="Kuramae E.E."/>
            <person name="Laigret F."/>
            <person name="Lambais M.R."/>
            <person name="Leite L.C.C."/>
            <person name="Lemos E.G.M."/>
            <person name="Lemos M.V.F."/>
            <person name="Lopes S.A."/>
            <person name="Lopes C.R."/>
            <person name="Machado J.A."/>
            <person name="Machado M.A."/>
            <person name="Madeira A.M.B.N."/>
            <person name="Madeira H.M.F."/>
            <person name="Marino C.L."/>
            <person name="Marques M.V."/>
            <person name="Martins E.A.L."/>
            <person name="Martins E.M.F."/>
            <person name="Matsukuma A.Y."/>
            <person name="Menck C.F.M."/>
            <person name="Miracca E.C."/>
            <person name="Miyaki C.Y."/>
            <person name="Monteiro-Vitorello C.B."/>
            <person name="Moon D.H."/>
            <person name="Nagai M.A."/>
            <person name="Nascimento A.L.T.O."/>
            <person name="Netto L.E.S."/>
            <person name="Nhani A. Jr."/>
            <person name="Nobrega F.G."/>
            <person name="Nunes L.R."/>
            <person name="Oliveira M.A."/>
            <person name="de Oliveira M.C."/>
            <person name="de Oliveira R.C."/>
            <person name="Palmieri D.A."/>
            <person name="Paris A."/>
            <person name="Peixoto B.R."/>
            <person name="Pereira G.A.G."/>
            <person name="Pereira H.A. Jr."/>
            <person name="Pesquero J.B."/>
            <person name="Quaggio R.B."/>
            <person name="Roberto P.G."/>
            <person name="Rodrigues V."/>
            <person name="de Rosa A.J.M."/>
            <person name="de Rosa V.E. Jr."/>
            <person name="de Sa R.G."/>
            <person name="Santelli R.V."/>
            <person name="Sawasaki H.E."/>
            <person name="da Silva A.C.R."/>
            <person name="da Silva A.M."/>
            <person name="da Silva F.R."/>
            <person name="Silva W.A. Jr."/>
            <person name="da Silveira J.F."/>
            <person name="Silvestri M.L.Z."/>
            <person name="Siqueira W.J."/>
            <person name="de Souza A.A."/>
            <person name="de Souza A.P."/>
            <person name="Terenzi M.F."/>
            <person name="Truffi D."/>
            <person name="Tsai S.M."/>
            <person name="Tsuhako M.H."/>
            <person name="Vallada H."/>
            <person name="Van Sluys M.A."/>
            <person name="Verjovski-Almeida S."/>
            <person name="Vettore A.L."/>
            <person name="Zago M.A."/>
            <person name="Zatz M."/>
            <person name="Meidanis J."/>
            <person name="Setubal J.C."/>
        </authorList>
    </citation>
    <scope>NUCLEOTIDE SEQUENCE [LARGE SCALE GENOMIC DNA]</scope>
    <source>
        <strain>9a5c</strain>
    </source>
</reference>
<gene>
    <name type="primary">gmk</name>
    <name type="ordered locus">XF_1503</name>
</gene>